<organism>
    <name type="scientific">Haemophilus influenzae (strain ATCC 51907 / DSM 11121 / KW20 / Rd)</name>
    <dbReference type="NCBI Taxonomy" id="71421"/>
    <lineage>
        <taxon>Bacteria</taxon>
        <taxon>Pseudomonadati</taxon>
        <taxon>Pseudomonadota</taxon>
        <taxon>Gammaproteobacteria</taxon>
        <taxon>Pasteurellales</taxon>
        <taxon>Pasteurellaceae</taxon>
        <taxon>Haemophilus</taxon>
    </lineage>
</organism>
<gene>
    <name type="ordered locus">HI_0520</name>
</gene>
<name>Y520_HAEIN</name>
<feature type="chain" id="PRO_0000200543" description="Putative glycyl-radical enzyme activating enzyme HI_0520">
    <location>
        <begin position="1"/>
        <end position="262"/>
    </location>
</feature>
<feature type="domain" description="Radical SAM core" evidence="2">
    <location>
        <begin position="20"/>
        <end position="262"/>
    </location>
</feature>
<feature type="binding site" evidence="1">
    <location>
        <position position="34"/>
    </location>
    <ligand>
        <name>[4Fe-4S] cluster</name>
        <dbReference type="ChEBI" id="CHEBI:49883"/>
        <note>4Fe-4S-S-AdoMet</note>
    </ligand>
</feature>
<feature type="binding site" evidence="1">
    <location>
        <position position="38"/>
    </location>
    <ligand>
        <name>[4Fe-4S] cluster</name>
        <dbReference type="ChEBI" id="CHEBI:49883"/>
        <note>4Fe-4S-S-AdoMet</note>
    </ligand>
</feature>
<feature type="binding site" evidence="1">
    <location>
        <begin position="40"/>
        <end position="42"/>
    </location>
    <ligand>
        <name>S-adenosyl-L-methionine</name>
        <dbReference type="ChEBI" id="CHEBI:59789"/>
    </ligand>
</feature>
<feature type="binding site" evidence="1">
    <location>
        <position position="41"/>
    </location>
    <ligand>
        <name>[4Fe-4S] cluster</name>
        <dbReference type="ChEBI" id="CHEBI:49883"/>
        <note>4Fe-4S-S-AdoMet</note>
    </ligand>
</feature>
<feature type="binding site" evidence="1">
    <location>
        <position position="81"/>
    </location>
    <ligand>
        <name>S-adenosyl-L-methionine</name>
        <dbReference type="ChEBI" id="CHEBI:59789"/>
    </ligand>
</feature>
<feature type="binding site" evidence="1">
    <location>
        <begin position="130"/>
        <end position="132"/>
    </location>
    <ligand>
        <name>S-adenosyl-L-methionine</name>
        <dbReference type="ChEBI" id="CHEBI:59789"/>
    </ligand>
</feature>
<comment type="catalytic activity">
    <reaction evidence="1">
        <text>glycyl-[protein] + reduced [flavodoxin] + S-adenosyl-L-methionine = glycin-2-yl radical-[protein] + semiquinone [flavodoxin] + 5'-deoxyadenosine + L-methionine + H(+)</text>
        <dbReference type="Rhea" id="RHEA:61976"/>
        <dbReference type="Rhea" id="RHEA-COMP:10622"/>
        <dbReference type="Rhea" id="RHEA-COMP:14480"/>
        <dbReference type="Rhea" id="RHEA-COMP:15993"/>
        <dbReference type="Rhea" id="RHEA-COMP:15994"/>
        <dbReference type="ChEBI" id="CHEBI:15378"/>
        <dbReference type="ChEBI" id="CHEBI:17319"/>
        <dbReference type="ChEBI" id="CHEBI:29947"/>
        <dbReference type="ChEBI" id="CHEBI:32722"/>
        <dbReference type="ChEBI" id="CHEBI:57618"/>
        <dbReference type="ChEBI" id="CHEBI:57844"/>
        <dbReference type="ChEBI" id="CHEBI:59789"/>
        <dbReference type="ChEBI" id="CHEBI:140311"/>
    </reaction>
</comment>
<comment type="cofactor">
    <cofactor evidence="1">
        <name>[4Fe-4S] cluster</name>
        <dbReference type="ChEBI" id="CHEBI:49883"/>
    </cofactor>
    <text evidence="1">Binds 1 [4Fe-4S] cluster. The cluster is coordinated with 3 cysteines and an exchangeable S-adenosyl-L-methionine.</text>
</comment>
<comment type="similarity">
    <text evidence="3">Belongs to the organic radical-activating enzymes family.</text>
</comment>
<protein>
    <recommendedName>
        <fullName evidence="3">Putative glycyl-radical enzyme activating enzyme HI_0520</fullName>
        <shortName evidence="3">GRE activating enzyme HI_0520</shortName>
        <ecNumber evidence="1">1.97.1.-</ecNumber>
    </recommendedName>
</protein>
<evidence type="ECO:0000250" key="1">
    <source>
        <dbReference type="UniProtKB" id="P0A9N4"/>
    </source>
</evidence>
<evidence type="ECO:0000255" key="2">
    <source>
        <dbReference type="PROSITE-ProRule" id="PRU01266"/>
    </source>
</evidence>
<evidence type="ECO:0000305" key="3"/>
<reference key="1">
    <citation type="journal article" date="1995" name="Science">
        <title>Whole-genome random sequencing and assembly of Haemophilus influenzae Rd.</title>
        <authorList>
            <person name="Fleischmann R.D."/>
            <person name="Adams M.D."/>
            <person name="White O."/>
            <person name="Clayton R.A."/>
            <person name="Kirkness E.F."/>
            <person name="Kerlavage A.R."/>
            <person name="Bult C.J."/>
            <person name="Tomb J.-F."/>
            <person name="Dougherty B.A."/>
            <person name="Merrick J.M."/>
            <person name="McKenney K."/>
            <person name="Sutton G.G."/>
            <person name="FitzHugh W."/>
            <person name="Fields C.A."/>
            <person name="Gocayne J.D."/>
            <person name="Scott J.D."/>
            <person name="Shirley R."/>
            <person name="Liu L.-I."/>
            <person name="Glodek A."/>
            <person name="Kelley J.M."/>
            <person name="Weidman J.F."/>
            <person name="Phillips C.A."/>
            <person name="Spriggs T."/>
            <person name="Hedblom E."/>
            <person name="Cotton M.D."/>
            <person name="Utterback T.R."/>
            <person name="Hanna M.C."/>
            <person name="Nguyen D.T."/>
            <person name="Saudek D.M."/>
            <person name="Brandon R.C."/>
            <person name="Fine L.D."/>
            <person name="Fritchman J.L."/>
            <person name="Fuhrmann J.L."/>
            <person name="Geoghagen N.S.M."/>
            <person name="Gnehm C.L."/>
            <person name="McDonald L.A."/>
            <person name="Small K.V."/>
            <person name="Fraser C.M."/>
            <person name="Smith H.O."/>
            <person name="Venter J.C."/>
        </authorList>
    </citation>
    <scope>NUCLEOTIDE SEQUENCE [LARGE SCALE GENOMIC DNA]</scope>
    <source>
        <strain>ATCC 51907 / DSM 11121 / KW20 / Rd</strain>
    </source>
</reference>
<accession>P44743</accession>
<proteinExistence type="inferred from homology"/>
<sequence length="262" mass="29496">MTALSEIFVPLHRIIPFSNVEGQGNRSSIFLQGCKLNCLYCHNPETIPRYTESAKLVSLQYLYEQVMEAVPFIRGVTVSGGEPTIHHKKLVPLFKALRSQGLTCYLDSSGFFEFDRVCSLIDVTDKFLFDLKGEGIGLQTLCFDRKNQAGIVPQQVIPERLHIKNDKLERNLQNLAALLPLNKVEEVRLVFLKHFFDAEHLVGKVAQLLRNYPDVALKIIRVHSKGVRDEAGLSAYIPSVEETNALSAYARQCGINKILTIL</sequence>
<keyword id="KW-0004">4Fe-4S</keyword>
<keyword id="KW-0408">Iron</keyword>
<keyword id="KW-0411">Iron-sulfur</keyword>
<keyword id="KW-0479">Metal-binding</keyword>
<keyword id="KW-0560">Oxidoreductase</keyword>
<keyword id="KW-1185">Reference proteome</keyword>
<keyword id="KW-0949">S-adenosyl-L-methionine</keyword>
<dbReference type="EC" id="1.97.1.-" evidence="1"/>
<dbReference type="EMBL" id="L42023">
    <property type="protein sequence ID" value="AAC22178.1"/>
    <property type="molecule type" value="Genomic_DNA"/>
</dbReference>
<dbReference type="PIR" id="B64154">
    <property type="entry name" value="B64154"/>
</dbReference>
<dbReference type="RefSeq" id="NP_438678.1">
    <property type="nucleotide sequence ID" value="NC_000907.1"/>
</dbReference>
<dbReference type="SMR" id="P44743"/>
<dbReference type="STRING" id="71421.HI_0520"/>
<dbReference type="EnsemblBacteria" id="AAC22178">
    <property type="protein sequence ID" value="AAC22178"/>
    <property type="gene ID" value="HI_0520"/>
</dbReference>
<dbReference type="KEGG" id="hin:HI_0520"/>
<dbReference type="PATRIC" id="fig|71421.8.peg.539"/>
<dbReference type="eggNOG" id="COG1180">
    <property type="taxonomic scope" value="Bacteria"/>
</dbReference>
<dbReference type="HOGENOM" id="CLU_058969_3_0_6"/>
<dbReference type="OrthoDB" id="9782387at2"/>
<dbReference type="PhylomeDB" id="P44743"/>
<dbReference type="BioCyc" id="HINF71421:G1GJ1-533-MONOMER"/>
<dbReference type="Proteomes" id="UP000000579">
    <property type="component" value="Chromosome"/>
</dbReference>
<dbReference type="GO" id="GO:0051539">
    <property type="term" value="F:4 iron, 4 sulfur cluster binding"/>
    <property type="evidence" value="ECO:0007669"/>
    <property type="project" value="UniProtKB-KW"/>
</dbReference>
<dbReference type="GO" id="GO:0046872">
    <property type="term" value="F:metal ion binding"/>
    <property type="evidence" value="ECO:0007669"/>
    <property type="project" value="UniProtKB-KW"/>
</dbReference>
<dbReference type="GO" id="GO:0016491">
    <property type="term" value="F:oxidoreductase activity"/>
    <property type="evidence" value="ECO:0007669"/>
    <property type="project" value="UniProtKB-KW"/>
</dbReference>
<dbReference type="CDD" id="cd01335">
    <property type="entry name" value="Radical_SAM"/>
    <property type="match status" value="1"/>
</dbReference>
<dbReference type="Gene3D" id="3.20.20.70">
    <property type="entry name" value="Aldolase class I"/>
    <property type="match status" value="1"/>
</dbReference>
<dbReference type="InterPro" id="IPR013785">
    <property type="entry name" value="Aldolase_TIM"/>
</dbReference>
<dbReference type="InterPro" id="IPR034457">
    <property type="entry name" value="Organic_radical-activating"/>
</dbReference>
<dbReference type="InterPro" id="IPR001989">
    <property type="entry name" value="Radical_activat_CS"/>
</dbReference>
<dbReference type="InterPro" id="IPR007197">
    <property type="entry name" value="rSAM"/>
</dbReference>
<dbReference type="PANTHER" id="PTHR30352:SF13">
    <property type="entry name" value="GLYCYL-RADICAL ENZYME ACTIVATING ENZYME YJJW-RELATED"/>
    <property type="match status" value="1"/>
</dbReference>
<dbReference type="PANTHER" id="PTHR30352">
    <property type="entry name" value="PYRUVATE FORMATE-LYASE-ACTIVATING ENZYME"/>
    <property type="match status" value="1"/>
</dbReference>
<dbReference type="Pfam" id="PF13353">
    <property type="entry name" value="Fer4_12"/>
    <property type="match status" value="1"/>
</dbReference>
<dbReference type="Pfam" id="PF04055">
    <property type="entry name" value="Radical_SAM"/>
    <property type="match status" value="1"/>
</dbReference>
<dbReference type="SFLD" id="SFLDS00029">
    <property type="entry name" value="Radical_SAM"/>
    <property type="match status" value="1"/>
</dbReference>
<dbReference type="SUPFAM" id="SSF102114">
    <property type="entry name" value="Radical SAM enzymes"/>
    <property type="match status" value="1"/>
</dbReference>
<dbReference type="PROSITE" id="PS01087">
    <property type="entry name" value="RADICAL_ACTIVATING"/>
    <property type="match status" value="1"/>
</dbReference>
<dbReference type="PROSITE" id="PS51918">
    <property type="entry name" value="RADICAL_SAM"/>
    <property type="match status" value="1"/>
</dbReference>